<proteinExistence type="inferred from homology"/>
<organism>
    <name type="scientific">Variola virus (isolate Human/India/Ind3/1967)</name>
    <name type="common">VARV</name>
    <name type="synonym">Smallpox virus</name>
    <dbReference type="NCBI Taxonomy" id="587200"/>
    <lineage>
        <taxon>Viruses</taxon>
        <taxon>Varidnaviria</taxon>
        <taxon>Bamfordvirae</taxon>
        <taxon>Nucleocytoviricota</taxon>
        <taxon>Pokkesviricetes</taxon>
        <taxon>Chitovirales</taxon>
        <taxon>Poxviridae</taxon>
        <taxon>Chordopoxvirinae</taxon>
        <taxon>Orthopoxvirus</taxon>
        <taxon>Variola virus</taxon>
    </lineage>
</organism>
<name>PG153_VAR67</name>
<feature type="chain" id="PRO_0000412610" description="Envelop protein OPG153">
    <location>
        <begin position="1"/>
        <end position="498"/>
    </location>
</feature>
<feature type="region of interest" description="Disordered" evidence="2">
    <location>
        <begin position="352"/>
        <end position="391"/>
    </location>
</feature>
<feature type="compositionally biased region" description="Basic and acidic residues" evidence="2">
    <location>
        <begin position="355"/>
        <end position="367"/>
    </location>
</feature>
<feature type="compositionally biased region" description="Pro residues" evidence="2">
    <location>
        <begin position="378"/>
        <end position="390"/>
    </location>
</feature>
<feature type="disulfide bond" evidence="1">
    <location>
        <begin position="43"/>
        <end position="342"/>
    </location>
</feature>
<feature type="disulfide bond" description="Interchain (with C-71 in A27)" evidence="1">
    <location>
        <position position="439"/>
    </location>
</feature>
<feature type="disulfide bond" description="Interchain (with C-72 in A27)" evidence="1">
    <location>
        <position position="440"/>
    </location>
</feature>
<sequence length="498" mass="57976">MVNIINLWNGIVPMVQDVNVASITAFKSMIDETWDKKIEANTCISRKHRNIIHEVIRDFMKAYPKMDENRKSPLGAPMQWLTQYYILKNEYYKTMLAYDNESLNTKFKTLNIYMITNVGQYILYIVFCIISGKNHNGTPYIYDSEITSNNKNLINDRIKYACKQILHGQLTMALRIRNKFMFIGSPMYLWFNVNGSHVYHEIYDGNVGFHNKEIGRLLYAFMYYLSISDRFLNDFALLKFTYLGESWTFSLSVPEYILYGLGYSVFDTIEKFSNDAILVYIKTNNRNGYDYVEFNKKGIVKVTETKPDNDKRIHAIRLINNSTDVQHIHFGFRNMVIIDNECANIQSSVENATDTGHHQDSKINIKDDDVDDDDYNPKPTPIPEPYPRPPFPRHEYYKRPKLLHVEEPDPVKKDADRIRLDNHILNTLDHNLNSIGHYCCDTAAVDRLEHHIETLGQYAVILARKINMQSLLFPWLLPTVHPHAIDGSIPPHGRSTIL</sequence>
<accession>Q89489</accession>
<dbReference type="EMBL" id="X69198">
    <property type="protein sequence ID" value="CAA49074.1"/>
    <property type="molecule type" value="Genomic_DNA"/>
</dbReference>
<dbReference type="PIR" id="C36851">
    <property type="entry name" value="C36851"/>
</dbReference>
<dbReference type="SMR" id="Q89489"/>
<dbReference type="KEGG" id="vg:1486505"/>
<dbReference type="Proteomes" id="UP000002060">
    <property type="component" value="Segment"/>
</dbReference>
<dbReference type="GO" id="GO:0016020">
    <property type="term" value="C:membrane"/>
    <property type="evidence" value="ECO:0007669"/>
    <property type="project" value="UniProtKB-KW"/>
</dbReference>
<dbReference type="GO" id="GO:0055036">
    <property type="term" value="C:virion membrane"/>
    <property type="evidence" value="ECO:0007669"/>
    <property type="project" value="UniProtKB-SubCell"/>
</dbReference>
<dbReference type="InterPro" id="IPR009285">
    <property type="entry name" value="Poxvirus_A26L"/>
</dbReference>
<dbReference type="Pfam" id="PF06086">
    <property type="entry name" value="Pox_A30L_A26L"/>
    <property type="match status" value="1"/>
</dbReference>
<evidence type="ECO:0000250" key="1">
    <source>
        <dbReference type="UniProtKB" id="P24758"/>
    </source>
</evidence>
<evidence type="ECO:0000256" key="2">
    <source>
        <dbReference type="SAM" id="MobiDB-lite"/>
    </source>
</evidence>
<evidence type="ECO:0000305" key="3"/>
<reference key="1">
    <citation type="journal article" date="1993" name="FEBS Lett.">
        <title>Genes of variola and vaccinia viruses necessary to overcome the host protective mechanisms.</title>
        <authorList>
            <person name="Shchelkunov S.N."/>
            <person name="Blinov V.M."/>
            <person name="Sandakhchiev L.S."/>
        </authorList>
    </citation>
    <scope>NUCLEOTIDE SEQUENCE [GENOMIC DNA]</scope>
    <source>
        <strain>India-1967</strain>
    </source>
</reference>
<reference key="2">
    <citation type="journal article" date="1994" name="Virus Res.">
        <title>Analysis of the nucleotide sequence of 53 kbp from the right terminus of the genome of variola major virus strain India-1967.</title>
        <authorList>
            <person name="Shchelkunov S.N."/>
            <person name="Blinov V.M."/>
            <person name="Resenchuk S.M."/>
            <person name="Totmenin A.V."/>
            <person name="Olenina L.V."/>
            <person name="Chirikova G.B."/>
            <person name="Sandakhchiev L.S."/>
        </authorList>
    </citation>
    <scope>NUCLEOTIDE SEQUENCE [GENOMIC DNA]</scope>
    <source>
        <strain>India-1967</strain>
    </source>
</reference>
<reference key="3">
    <citation type="journal article" date="1995" name="Virus Genes">
        <title>Two types of deletions in orthopoxvirus genomes.</title>
        <authorList>
            <person name="Shchelkunov S.N."/>
            <person name="Totmenin A.V."/>
        </authorList>
    </citation>
    <scope>NUCLEOTIDE SEQUENCE [GENOMIC DNA]</scope>
    <source>
        <strain>India-1967</strain>
    </source>
</reference>
<reference key="4">
    <citation type="journal article" date="1996" name="Virus Res.">
        <title>Analysis of the nucleotide sequence of 23.8 kbp from the left terminus of the genome of variola major virus strain India-1967.</title>
        <authorList>
            <person name="Shchelkunov S.N."/>
            <person name="Totmenin A.V."/>
            <person name="Sandakhchiev L.S."/>
        </authorList>
    </citation>
    <scope>NUCLEOTIDE SEQUENCE [GENOMIC DNA]</scope>
    <source>
        <strain>India-1967</strain>
    </source>
</reference>
<gene>
    <name type="primary">Protein OPG153</name>
</gene>
<comment type="function">
    <text evidence="1">Envelop protein that mediates acid-dependent endocytosis into host cells. Plays an important role in endocytic entry of the virus by acting as an acid-sensitive membrane fusion suppressor. Low pH in host endosomes triggers conformational changes to allow de-repression of viral fusion complex activity and membrane fusion within vesicles. Also plays a role in bridging the mature virion with structural protein OPG152.</text>
</comment>
<comment type="subunit">
    <text evidence="1">Interacts with proteins OPG094 and OPG143. Interacts with OPG154. Interacts with OPG152. Interacts with host laminin.</text>
</comment>
<comment type="subcellular location">
    <subcellularLocation>
        <location evidence="1">Virion membrane</location>
    </subcellularLocation>
    <text evidence="1">OPG153 is anchored to the mature virion (MV) membrane through disulfide bonding with protein OPG154.</text>
</comment>
<comment type="similarity">
    <text evidence="3">Belongs to the orthopoxvirus OPG153 protein family.</text>
</comment>
<keyword id="KW-1015">Disulfide bond</keyword>
<keyword id="KW-0472">Membrane</keyword>
<keyword id="KW-0597">Phosphoprotein</keyword>
<keyword id="KW-1185">Reference proteome</keyword>
<keyword id="KW-0946">Virion</keyword>
<protein>
    <recommendedName>
        <fullName>Envelop protein OPG153</fullName>
    </recommendedName>
</protein>
<organismHost>
    <name type="scientific">Homo sapiens</name>
    <name type="common">Human</name>
    <dbReference type="NCBI Taxonomy" id="9606"/>
</organismHost>